<comment type="catalytic activity">
    <reaction evidence="3">
        <text>(S)-malate + NAD(+) = oxaloacetate + NADH + H(+)</text>
        <dbReference type="Rhea" id="RHEA:21432"/>
        <dbReference type="ChEBI" id="CHEBI:15378"/>
        <dbReference type="ChEBI" id="CHEBI:15589"/>
        <dbReference type="ChEBI" id="CHEBI:16452"/>
        <dbReference type="ChEBI" id="CHEBI:57540"/>
        <dbReference type="ChEBI" id="CHEBI:57945"/>
        <dbReference type="EC" id="1.1.1.37"/>
    </reaction>
</comment>
<comment type="subunit">
    <text evidence="1">Homodimer.</text>
</comment>
<comment type="subcellular location">
    <subcellularLocation>
        <location>Mitochondrion matrix</location>
    </subcellularLocation>
</comment>
<comment type="similarity">
    <text evidence="4">Belongs to the LDH/MDH superfamily. MDH type 1 family.</text>
</comment>
<reference key="1">
    <citation type="journal article" date="1995" name="Plant Physiol.">
        <title>Nucleotide sequence of a cDNA encoding mitochondrial malate dehydrogenase from Eucalyptus.</title>
        <authorList>
            <person name="Poeydomenge O."/>
            <person name="Boudet A.M."/>
            <person name="Grima-Pettenati J."/>
            <person name="Marolda M."/>
        </authorList>
    </citation>
    <scope>NUCLEOTIDE SEQUENCE [MRNA]</scope>
</reference>
<accession>P46487</accession>
<name>MDHM_EUCGU</name>
<sequence>MRASMLRLIRSRSSSAAPRPHLLRRAYGSESVPERKVAVLGAAGGIGQPLALLMKLNPLVSQLALYDIAGTPGVAADVGHINTRSEVAGYVGEEQLGQALEGSDVVIIPAGVPRKPGMTRDDLFNINAGIVKSLCTAIAKYCPNAVVNMISNPVNSTVPIAAEIFKKAGTYNEKKLLGVTTLDVVRAKTFYAGKAKVPVEEVNVPVVGGHAGITILPLFSQAVPKANLADEDIKALTKRTQDGGTEVVEAKAGKGSATLSMAYAGALFADACLKGLNGVPDVVECSFVQSSIITELPFFASKVKLGKNGVEEVLELGPMSDYEKQGLEILIPELKASIEKGIKFANQ</sequence>
<evidence type="ECO:0000250" key="1"/>
<evidence type="ECO:0000255" key="2"/>
<evidence type="ECO:0000255" key="3">
    <source>
        <dbReference type="PROSITE-ProRule" id="PRU10004"/>
    </source>
</evidence>
<evidence type="ECO:0000305" key="4"/>
<protein>
    <recommendedName>
        <fullName>Malate dehydrogenase, mitochondrial</fullName>
        <ecNumber>1.1.1.37</ecNumber>
    </recommendedName>
</protein>
<organism>
    <name type="scientific">Eucalyptus gunnii</name>
    <name type="common">Cider gum</name>
    <dbReference type="NCBI Taxonomy" id="3933"/>
    <lineage>
        <taxon>Eukaryota</taxon>
        <taxon>Viridiplantae</taxon>
        <taxon>Streptophyta</taxon>
        <taxon>Embryophyta</taxon>
        <taxon>Tracheophyta</taxon>
        <taxon>Spermatophyta</taxon>
        <taxon>Magnoliopsida</taxon>
        <taxon>eudicotyledons</taxon>
        <taxon>Gunneridae</taxon>
        <taxon>Pentapetalae</taxon>
        <taxon>rosids</taxon>
        <taxon>malvids</taxon>
        <taxon>Myrtales</taxon>
        <taxon>Myrtaceae</taxon>
        <taxon>Myrtoideae</taxon>
        <taxon>Eucalypteae</taxon>
        <taxon>Eucalyptus</taxon>
    </lineage>
</organism>
<dbReference type="EC" id="1.1.1.37"/>
<dbReference type="EMBL" id="X78800">
    <property type="protein sequence ID" value="CAA55383.1"/>
    <property type="molecule type" value="mRNA"/>
</dbReference>
<dbReference type="PIR" id="S44167">
    <property type="entry name" value="S44167"/>
</dbReference>
<dbReference type="SMR" id="P46487"/>
<dbReference type="GO" id="GO:0005759">
    <property type="term" value="C:mitochondrial matrix"/>
    <property type="evidence" value="ECO:0007669"/>
    <property type="project" value="UniProtKB-SubCell"/>
</dbReference>
<dbReference type="GO" id="GO:0030060">
    <property type="term" value="F:L-malate dehydrogenase (NAD+) activity"/>
    <property type="evidence" value="ECO:0007669"/>
    <property type="project" value="UniProtKB-EC"/>
</dbReference>
<dbReference type="GO" id="GO:0006108">
    <property type="term" value="P:malate metabolic process"/>
    <property type="evidence" value="ECO:0007669"/>
    <property type="project" value="InterPro"/>
</dbReference>
<dbReference type="GO" id="GO:0006099">
    <property type="term" value="P:tricarboxylic acid cycle"/>
    <property type="evidence" value="ECO:0007669"/>
    <property type="project" value="UniProtKB-KW"/>
</dbReference>
<dbReference type="CDD" id="cd01337">
    <property type="entry name" value="MDH_glyoxysomal_mitochondrial"/>
    <property type="match status" value="1"/>
</dbReference>
<dbReference type="FunFam" id="3.40.50.720:FF:000013">
    <property type="entry name" value="Malate dehydrogenase"/>
    <property type="match status" value="1"/>
</dbReference>
<dbReference type="FunFam" id="3.90.110.10:FF:000001">
    <property type="entry name" value="Malate dehydrogenase"/>
    <property type="match status" value="1"/>
</dbReference>
<dbReference type="Gene3D" id="3.90.110.10">
    <property type="entry name" value="Lactate dehydrogenase/glycoside hydrolase, family 4, C-terminal"/>
    <property type="match status" value="1"/>
</dbReference>
<dbReference type="Gene3D" id="3.40.50.720">
    <property type="entry name" value="NAD(P)-binding Rossmann-like Domain"/>
    <property type="match status" value="1"/>
</dbReference>
<dbReference type="InterPro" id="IPR001557">
    <property type="entry name" value="L-lactate/malate_DH"/>
</dbReference>
<dbReference type="InterPro" id="IPR022383">
    <property type="entry name" value="Lactate/malate_DH_C"/>
</dbReference>
<dbReference type="InterPro" id="IPR001236">
    <property type="entry name" value="Lactate/malate_DH_N"/>
</dbReference>
<dbReference type="InterPro" id="IPR015955">
    <property type="entry name" value="Lactate_DH/Glyco_Ohase_4_C"/>
</dbReference>
<dbReference type="InterPro" id="IPR001252">
    <property type="entry name" value="Malate_DH_AS"/>
</dbReference>
<dbReference type="InterPro" id="IPR010097">
    <property type="entry name" value="Malate_DH_type1"/>
</dbReference>
<dbReference type="InterPro" id="IPR036291">
    <property type="entry name" value="NAD(P)-bd_dom_sf"/>
</dbReference>
<dbReference type="NCBIfam" id="TIGR01772">
    <property type="entry name" value="MDH_euk_gproteo"/>
    <property type="match status" value="1"/>
</dbReference>
<dbReference type="PANTHER" id="PTHR11540">
    <property type="entry name" value="MALATE AND LACTATE DEHYDROGENASE"/>
    <property type="match status" value="1"/>
</dbReference>
<dbReference type="PANTHER" id="PTHR11540:SF58">
    <property type="entry name" value="MALATE DEHYDROGENASE 1, MITOCHONDRIAL-RELATED"/>
    <property type="match status" value="1"/>
</dbReference>
<dbReference type="Pfam" id="PF02866">
    <property type="entry name" value="Ldh_1_C"/>
    <property type="match status" value="1"/>
</dbReference>
<dbReference type="Pfam" id="PF00056">
    <property type="entry name" value="Ldh_1_N"/>
    <property type="match status" value="1"/>
</dbReference>
<dbReference type="PIRSF" id="PIRSF000102">
    <property type="entry name" value="Lac_mal_DH"/>
    <property type="match status" value="1"/>
</dbReference>
<dbReference type="SUPFAM" id="SSF56327">
    <property type="entry name" value="LDH C-terminal domain-like"/>
    <property type="match status" value="1"/>
</dbReference>
<dbReference type="SUPFAM" id="SSF51735">
    <property type="entry name" value="NAD(P)-binding Rossmann-fold domains"/>
    <property type="match status" value="1"/>
</dbReference>
<dbReference type="PROSITE" id="PS00068">
    <property type="entry name" value="MDH"/>
    <property type="match status" value="1"/>
</dbReference>
<gene>
    <name type="primary">MDH</name>
</gene>
<feature type="transit peptide" description="Mitochondrion" evidence="2">
    <location>
        <begin position="1"/>
        <end position="27"/>
    </location>
</feature>
<feature type="chain" id="PRO_0000018626" description="Malate dehydrogenase, mitochondrial">
    <location>
        <begin position="28"/>
        <end position="347"/>
    </location>
</feature>
<feature type="active site" description="Proton acceptor" evidence="1">
    <location>
        <position position="210"/>
    </location>
</feature>
<feature type="binding site" evidence="1">
    <location>
        <begin position="41"/>
        <end position="47"/>
    </location>
    <ligand>
        <name>NAD(+)</name>
        <dbReference type="ChEBI" id="CHEBI:57540"/>
    </ligand>
</feature>
<feature type="binding site" evidence="1">
    <location>
        <position position="67"/>
    </location>
    <ligand>
        <name>NAD(+)</name>
        <dbReference type="ChEBI" id="CHEBI:57540"/>
    </ligand>
</feature>
<feature type="binding site" evidence="3">
    <location>
        <position position="114"/>
    </location>
    <ligand>
        <name>substrate</name>
    </ligand>
</feature>
<feature type="binding site" evidence="3">
    <location>
        <position position="120"/>
    </location>
    <ligand>
        <name>substrate</name>
    </ligand>
</feature>
<feature type="binding site" evidence="1">
    <location>
        <position position="127"/>
    </location>
    <ligand>
        <name>NAD(+)</name>
        <dbReference type="ChEBI" id="CHEBI:57540"/>
    </ligand>
</feature>
<feature type="binding site" evidence="1">
    <location>
        <begin position="150"/>
        <end position="152"/>
    </location>
    <ligand>
        <name>NAD(+)</name>
        <dbReference type="ChEBI" id="CHEBI:57540"/>
    </ligand>
</feature>
<feature type="binding site" evidence="3">
    <location>
        <position position="152"/>
    </location>
    <ligand>
        <name>substrate</name>
    </ligand>
</feature>
<feature type="binding site" evidence="3">
    <location>
        <position position="186"/>
    </location>
    <ligand>
        <name>substrate</name>
    </ligand>
</feature>
<feature type="binding site" evidence="1">
    <location>
        <position position="261"/>
    </location>
    <ligand>
        <name>NAD(+)</name>
        <dbReference type="ChEBI" id="CHEBI:57540"/>
    </ligand>
</feature>
<proteinExistence type="evidence at transcript level"/>
<keyword id="KW-0496">Mitochondrion</keyword>
<keyword id="KW-0520">NAD</keyword>
<keyword id="KW-0560">Oxidoreductase</keyword>
<keyword id="KW-0809">Transit peptide</keyword>
<keyword id="KW-0816">Tricarboxylic acid cycle</keyword>